<evidence type="ECO:0000255" key="1">
    <source>
        <dbReference type="HAMAP-Rule" id="MF_00563"/>
    </source>
</evidence>
<comment type="function">
    <text evidence="1">May play a key role in the regulation of the intracellular concentration of adenosylhomocysteine.</text>
</comment>
<comment type="catalytic activity">
    <reaction evidence="1">
        <text>S-adenosyl-L-homocysteine + H2O = L-homocysteine + adenosine</text>
        <dbReference type="Rhea" id="RHEA:21708"/>
        <dbReference type="ChEBI" id="CHEBI:15377"/>
        <dbReference type="ChEBI" id="CHEBI:16335"/>
        <dbReference type="ChEBI" id="CHEBI:57856"/>
        <dbReference type="ChEBI" id="CHEBI:58199"/>
        <dbReference type="EC" id="3.13.2.1"/>
    </reaction>
</comment>
<comment type="cofactor">
    <cofactor evidence="1">
        <name>NAD(+)</name>
        <dbReference type="ChEBI" id="CHEBI:57540"/>
    </cofactor>
    <text evidence="1">Binds 1 NAD(+) per subunit.</text>
</comment>
<comment type="pathway">
    <text evidence="1">Amino-acid biosynthesis; L-homocysteine biosynthesis; L-homocysteine from S-adenosyl-L-homocysteine: step 1/1.</text>
</comment>
<comment type="subcellular location">
    <subcellularLocation>
        <location evidence="1">Cytoplasm</location>
    </subcellularLocation>
</comment>
<comment type="similarity">
    <text evidence="1">Belongs to the adenosylhomocysteinase family.</text>
</comment>
<protein>
    <recommendedName>
        <fullName evidence="1">Adenosylhomocysteinase</fullName>
        <ecNumber evidence="1">3.13.2.1</ecNumber>
    </recommendedName>
    <alternativeName>
        <fullName evidence="1">S-adenosyl-L-homocysteine hydrolase</fullName>
        <shortName evidence="1">AdoHcyase</shortName>
    </alternativeName>
</protein>
<sequence>MSAVNTPAGFTDFKVADISLAAWGRRETIIAESEMPALMGLRRKYLAEQPLKGAKILGCIHMTIQTAVLIETLVALGAEVRWSSCNIFSTQDQAAASIAAAGIPVFAWKGETEEEYEWCLEQTILKDGQPWDANMILDDGGDLTELLHKKYPAVLDRVHGVTEETTTGVHRLLDMLAKGELKVPAINVNDSVTKSKNDNKYGCRHSLSDAIKRGTDHLLSGKQALVIGYGDVGKGSAQSLRQEGMIVKVTEVDPICAMQACMDGFELVSPFIDGINDGTEASIDKALLGKIDLIVTTTGNVNVCDANMLKALKKRAVVCNIGHFDNEIDTAFMRKNWAWEEVKPQVHKIHRTGAGDFDPQNDDYLILLAEGRLVNLGNATGHPSRIMDGSFANQVLAQIFLFEQKFADLSAEKKAERLTVEVLPKKLDEEVALEMVRGFGGVVTKLTQQQADYIGVTVEGPFKPHAYRY</sequence>
<feature type="chain" id="PRO_1000129296" description="Adenosylhomocysteinase">
    <location>
        <begin position="1"/>
        <end position="469"/>
    </location>
</feature>
<feature type="binding site" evidence="1">
    <location>
        <position position="63"/>
    </location>
    <ligand>
        <name>substrate</name>
    </ligand>
</feature>
<feature type="binding site" evidence="1">
    <location>
        <position position="139"/>
    </location>
    <ligand>
        <name>substrate</name>
    </ligand>
</feature>
<feature type="binding site" evidence="1">
    <location>
        <position position="164"/>
    </location>
    <ligand>
        <name>substrate</name>
    </ligand>
</feature>
<feature type="binding site" evidence="1">
    <location>
        <begin position="165"/>
        <end position="167"/>
    </location>
    <ligand>
        <name>NAD(+)</name>
        <dbReference type="ChEBI" id="CHEBI:57540"/>
    </ligand>
</feature>
<feature type="binding site" evidence="1">
    <location>
        <position position="194"/>
    </location>
    <ligand>
        <name>substrate</name>
    </ligand>
</feature>
<feature type="binding site" evidence="1">
    <location>
        <position position="198"/>
    </location>
    <ligand>
        <name>substrate</name>
    </ligand>
</feature>
<feature type="binding site" evidence="1">
    <location>
        <position position="199"/>
    </location>
    <ligand>
        <name>NAD(+)</name>
        <dbReference type="ChEBI" id="CHEBI:57540"/>
    </ligand>
</feature>
<feature type="binding site" evidence="1">
    <location>
        <begin position="228"/>
        <end position="233"/>
    </location>
    <ligand>
        <name>NAD(+)</name>
        <dbReference type="ChEBI" id="CHEBI:57540"/>
    </ligand>
</feature>
<feature type="binding site" evidence="1">
    <location>
        <position position="251"/>
    </location>
    <ligand>
        <name>NAD(+)</name>
        <dbReference type="ChEBI" id="CHEBI:57540"/>
    </ligand>
</feature>
<feature type="binding site" evidence="1">
    <location>
        <position position="300"/>
    </location>
    <ligand>
        <name>NAD(+)</name>
        <dbReference type="ChEBI" id="CHEBI:57540"/>
    </ligand>
</feature>
<feature type="binding site" evidence="1">
    <location>
        <begin position="321"/>
        <end position="323"/>
    </location>
    <ligand>
        <name>NAD(+)</name>
        <dbReference type="ChEBI" id="CHEBI:57540"/>
    </ligand>
</feature>
<feature type="binding site" evidence="1">
    <location>
        <position position="375"/>
    </location>
    <ligand>
        <name>NAD(+)</name>
        <dbReference type="ChEBI" id="CHEBI:57540"/>
    </ligand>
</feature>
<keyword id="KW-0963">Cytoplasm</keyword>
<keyword id="KW-0378">Hydrolase</keyword>
<keyword id="KW-0520">NAD</keyword>
<keyword id="KW-0554">One-carbon metabolism</keyword>
<organism>
    <name type="scientific">Pseudomonas putida (strain W619)</name>
    <dbReference type="NCBI Taxonomy" id="390235"/>
    <lineage>
        <taxon>Bacteria</taxon>
        <taxon>Pseudomonadati</taxon>
        <taxon>Pseudomonadota</taxon>
        <taxon>Gammaproteobacteria</taxon>
        <taxon>Pseudomonadales</taxon>
        <taxon>Pseudomonadaceae</taxon>
        <taxon>Pseudomonas</taxon>
    </lineage>
</organism>
<gene>
    <name evidence="1" type="primary">ahcY</name>
    <name type="ordered locus">PputW619_0489</name>
</gene>
<reference key="1">
    <citation type="submission" date="2008-02" db="EMBL/GenBank/DDBJ databases">
        <title>Complete sequence of Pseudomonas putida W619.</title>
        <authorList>
            <person name="Copeland A."/>
            <person name="Lucas S."/>
            <person name="Lapidus A."/>
            <person name="Barry K."/>
            <person name="Detter J.C."/>
            <person name="Glavina del Rio T."/>
            <person name="Dalin E."/>
            <person name="Tice H."/>
            <person name="Pitluck S."/>
            <person name="Chain P."/>
            <person name="Malfatti S."/>
            <person name="Shin M."/>
            <person name="Vergez L."/>
            <person name="Schmutz J."/>
            <person name="Larimer F."/>
            <person name="Land M."/>
            <person name="Hauser L."/>
            <person name="Kyrpides N."/>
            <person name="Kim E."/>
            <person name="Taghavi S."/>
            <person name="Vangronsveld D."/>
            <person name="van der Lelie D."/>
            <person name="Richardson P."/>
        </authorList>
    </citation>
    <scope>NUCLEOTIDE SEQUENCE [LARGE SCALE GENOMIC DNA]</scope>
    <source>
        <strain>W619</strain>
    </source>
</reference>
<proteinExistence type="inferred from homology"/>
<name>SAHH_PSEPW</name>
<dbReference type="EC" id="3.13.2.1" evidence="1"/>
<dbReference type="EMBL" id="CP000949">
    <property type="protein sequence ID" value="ACA70994.1"/>
    <property type="molecule type" value="Genomic_DNA"/>
</dbReference>
<dbReference type="SMR" id="B1J2Y8"/>
<dbReference type="STRING" id="390235.PputW619_0489"/>
<dbReference type="KEGG" id="ppw:PputW619_0489"/>
<dbReference type="eggNOG" id="COG0499">
    <property type="taxonomic scope" value="Bacteria"/>
</dbReference>
<dbReference type="HOGENOM" id="CLU_025194_2_1_6"/>
<dbReference type="OrthoDB" id="9802717at2"/>
<dbReference type="UniPathway" id="UPA00314">
    <property type="reaction ID" value="UER00076"/>
</dbReference>
<dbReference type="GO" id="GO:0005829">
    <property type="term" value="C:cytosol"/>
    <property type="evidence" value="ECO:0007669"/>
    <property type="project" value="TreeGrafter"/>
</dbReference>
<dbReference type="GO" id="GO:0004013">
    <property type="term" value="F:adenosylhomocysteinase activity"/>
    <property type="evidence" value="ECO:0007669"/>
    <property type="project" value="UniProtKB-UniRule"/>
</dbReference>
<dbReference type="GO" id="GO:0071269">
    <property type="term" value="P:L-homocysteine biosynthetic process"/>
    <property type="evidence" value="ECO:0007669"/>
    <property type="project" value="UniProtKB-UniRule"/>
</dbReference>
<dbReference type="GO" id="GO:0006730">
    <property type="term" value="P:one-carbon metabolic process"/>
    <property type="evidence" value="ECO:0007669"/>
    <property type="project" value="UniProtKB-KW"/>
</dbReference>
<dbReference type="GO" id="GO:0033353">
    <property type="term" value="P:S-adenosylmethionine cycle"/>
    <property type="evidence" value="ECO:0007669"/>
    <property type="project" value="TreeGrafter"/>
</dbReference>
<dbReference type="CDD" id="cd00401">
    <property type="entry name" value="SAHH"/>
    <property type="match status" value="1"/>
</dbReference>
<dbReference type="FunFam" id="3.40.50.1480:FF:000006">
    <property type="entry name" value="Adenosylhomocysteinase"/>
    <property type="match status" value="1"/>
</dbReference>
<dbReference type="FunFam" id="3.40.50.1480:FF:000007">
    <property type="entry name" value="Adenosylhomocysteinase"/>
    <property type="match status" value="1"/>
</dbReference>
<dbReference type="FunFam" id="3.40.50.720:FF:000155">
    <property type="entry name" value="Adenosylhomocysteinase"/>
    <property type="match status" value="1"/>
</dbReference>
<dbReference type="Gene3D" id="3.40.50.1480">
    <property type="entry name" value="Adenosylhomocysteinase-like"/>
    <property type="match status" value="3"/>
</dbReference>
<dbReference type="Gene3D" id="3.40.50.720">
    <property type="entry name" value="NAD(P)-binding Rossmann-like Domain"/>
    <property type="match status" value="1"/>
</dbReference>
<dbReference type="HAMAP" id="MF_00563">
    <property type="entry name" value="AdoHcyase"/>
    <property type="match status" value="1"/>
</dbReference>
<dbReference type="InterPro" id="IPR042172">
    <property type="entry name" value="Adenosylhomocyst_ase-like_sf"/>
</dbReference>
<dbReference type="InterPro" id="IPR000043">
    <property type="entry name" value="Adenosylhomocysteinase-like"/>
</dbReference>
<dbReference type="InterPro" id="IPR015878">
    <property type="entry name" value="Ado_hCys_hydrolase_NAD-bd"/>
</dbReference>
<dbReference type="InterPro" id="IPR036291">
    <property type="entry name" value="NAD(P)-bd_dom_sf"/>
</dbReference>
<dbReference type="InterPro" id="IPR020082">
    <property type="entry name" value="S-Ado-L-homoCys_hydrolase_CS"/>
</dbReference>
<dbReference type="NCBIfam" id="TIGR00936">
    <property type="entry name" value="ahcY"/>
    <property type="match status" value="1"/>
</dbReference>
<dbReference type="NCBIfam" id="NF004005">
    <property type="entry name" value="PRK05476.2-3"/>
    <property type="match status" value="1"/>
</dbReference>
<dbReference type="PANTHER" id="PTHR23420">
    <property type="entry name" value="ADENOSYLHOMOCYSTEINASE"/>
    <property type="match status" value="1"/>
</dbReference>
<dbReference type="PANTHER" id="PTHR23420:SF0">
    <property type="entry name" value="ADENOSYLHOMOCYSTEINASE"/>
    <property type="match status" value="1"/>
</dbReference>
<dbReference type="Pfam" id="PF05221">
    <property type="entry name" value="AdoHcyase"/>
    <property type="match status" value="1"/>
</dbReference>
<dbReference type="Pfam" id="PF00670">
    <property type="entry name" value="AdoHcyase_NAD"/>
    <property type="match status" value="1"/>
</dbReference>
<dbReference type="PIRSF" id="PIRSF001109">
    <property type="entry name" value="Ad_hcy_hydrolase"/>
    <property type="match status" value="1"/>
</dbReference>
<dbReference type="SMART" id="SM00996">
    <property type="entry name" value="AdoHcyase"/>
    <property type="match status" value="1"/>
</dbReference>
<dbReference type="SMART" id="SM00997">
    <property type="entry name" value="AdoHcyase_NAD"/>
    <property type="match status" value="1"/>
</dbReference>
<dbReference type="SUPFAM" id="SSF52283">
    <property type="entry name" value="Formate/glycerate dehydrogenase catalytic domain-like"/>
    <property type="match status" value="1"/>
</dbReference>
<dbReference type="SUPFAM" id="SSF51735">
    <property type="entry name" value="NAD(P)-binding Rossmann-fold domains"/>
    <property type="match status" value="1"/>
</dbReference>
<dbReference type="PROSITE" id="PS00738">
    <property type="entry name" value="ADOHCYASE_1"/>
    <property type="match status" value="1"/>
</dbReference>
<dbReference type="PROSITE" id="PS00739">
    <property type="entry name" value="ADOHCYASE_2"/>
    <property type="match status" value="1"/>
</dbReference>
<accession>B1J2Y8</accession>